<sequence length="315" mass="35020">MAVVTIRQLLDCGVHFGHPKTRWNPKMKRFIFTERSGIYIIDLQQSLALIDKAYDFVKETVAHGGTILFVGTKKQAQESIAEQAQRVGQPYVNQRWLGGLLTNFQTVHKRLNRLKELDLVDFDDTTRGFTKKELLIQRRERDKLEKSLGGIRNLTKTPSAMWVVDTKKEHLAIDEARKLGIPVIGILDTNCDPDEVQYPIPGNDDAIRSVALLTRIIADAAAEGLIQRHQKPDAEGSAPAEPLADWERELLEQGDAAKAELPVEENDVDAEVSAKNEAKSEDEVAAPVHAPESDDATEAKIEAEATESEKAPVSE</sequence>
<evidence type="ECO:0000255" key="1">
    <source>
        <dbReference type="HAMAP-Rule" id="MF_00291"/>
    </source>
</evidence>
<evidence type="ECO:0000256" key="2">
    <source>
        <dbReference type="SAM" id="MobiDB-lite"/>
    </source>
</evidence>
<evidence type="ECO:0000305" key="3"/>
<reference key="1">
    <citation type="journal article" date="2008" name="J. Bacteriol.">
        <title>The genome sequence of the tomato-pathogenic actinomycete Clavibacter michiganensis subsp. michiganensis NCPPB382 reveals a large island involved in pathogenicity.</title>
        <authorList>
            <person name="Gartemann K.-H."/>
            <person name="Abt B."/>
            <person name="Bekel T."/>
            <person name="Burger A."/>
            <person name="Engemann J."/>
            <person name="Fluegel M."/>
            <person name="Gaigalat L."/>
            <person name="Goesmann A."/>
            <person name="Graefen I."/>
            <person name="Kalinowski J."/>
            <person name="Kaup O."/>
            <person name="Kirchner O."/>
            <person name="Krause L."/>
            <person name="Linke B."/>
            <person name="McHardy A."/>
            <person name="Meyer F."/>
            <person name="Pohle S."/>
            <person name="Rueckert C."/>
            <person name="Schneiker S."/>
            <person name="Zellermann E.-M."/>
            <person name="Puehler A."/>
            <person name="Eichenlaub R."/>
            <person name="Kaiser O."/>
            <person name="Bartels D."/>
        </authorList>
    </citation>
    <scope>NUCLEOTIDE SEQUENCE [LARGE SCALE GENOMIC DNA]</scope>
    <source>
        <strain>NCPPB 382</strain>
    </source>
</reference>
<dbReference type="EMBL" id="AM711867">
    <property type="protein sequence ID" value="CAN01428.1"/>
    <property type="molecule type" value="Genomic_DNA"/>
</dbReference>
<dbReference type="RefSeq" id="WP_012038069.1">
    <property type="nucleotide sequence ID" value="NC_009480.1"/>
</dbReference>
<dbReference type="SMR" id="A5CQS5"/>
<dbReference type="GeneID" id="92947354"/>
<dbReference type="KEGG" id="cmi:CMM_1383"/>
<dbReference type="eggNOG" id="COG0052">
    <property type="taxonomic scope" value="Bacteria"/>
</dbReference>
<dbReference type="HOGENOM" id="CLU_040318_2_3_11"/>
<dbReference type="OrthoDB" id="9808036at2"/>
<dbReference type="Proteomes" id="UP000001564">
    <property type="component" value="Chromosome"/>
</dbReference>
<dbReference type="GO" id="GO:0022627">
    <property type="term" value="C:cytosolic small ribosomal subunit"/>
    <property type="evidence" value="ECO:0007669"/>
    <property type="project" value="TreeGrafter"/>
</dbReference>
<dbReference type="GO" id="GO:0003735">
    <property type="term" value="F:structural constituent of ribosome"/>
    <property type="evidence" value="ECO:0007669"/>
    <property type="project" value="InterPro"/>
</dbReference>
<dbReference type="GO" id="GO:0006412">
    <property type="term" value="P:translation"/>
    <property type="evidence" value="ECO:0007669"/>
    <property type="project" value="UniProtKB-UniRule"/>
</dbReference>
<dbReference type="CDD" id="cd01425">
    <property type="entry name" value="RPS2"/>
    <property type="match status" value="1"/>
</dbReference>
<dbReference type="Gene3D" id="3.40.50.10490">
    <property type="entry name" value="Glucose-6-phosphate isomerase like protein, domain 1"/>
    <property type="match status" value="1"/>
</dbReference>
<dbReference type="Gene3D" id="1.10.287.610">
    <property type="entry name" value="Helix hairpin bin"/>
    <property type="match status" value="1"/>
</dbReference>
<dbReference type="HAMAP" id="MF_00291_B">
    <property type="entry name" value="Ribosomal_uS2_B"/>
    <property type="match status" value="1"/>
</dbReference>
<dbReference type="InterPro" id="IPR001865">
    <property type="entry name" value="Ribosomal_uS2"/>
</dbReference>
<dbReference type="InterPro" id="IPR005706">
    <property type="entry name" value="Ribosomal_uS2_bac/mit/plastid"/>
</dbReference>
<dbReference type="InterPro" id="IPR018130">
    <property type="entry name" value="Ribosomal_uS2_CS"/>
</dbReference>
<dbReference type="InterPro" id="IPR023591">
    <property type="entry name" value="Ribosomal_uS2_flav_dom_sf"/>
</dbReference>
<dbReference type="NCBIfam" id="TIGR01011">
    <property type="entry name" value="rpsB_bact"/>
    <property type="match status" value="1"/>
</dbReference>
<dbReference type="PANTHER" id="PTHR12534">
    <property type="entry name" value="30S RIBOSOMAL PROTEIN S2 PROKARYOTIC AND ORGANELLAR"/>
    <property type="match status" value="1"/>
</dbReference>
<dbReference type="PANTHER" id="PTHR12534:SF0">
    <property type="entry name" value="SMALL RIBOSOMAL SUBUNIT PROTEIN US2M"/>
    <property type="match status" value="1"/>
</dbReference>
<dbReference type="Pfam" id="PF00318">
    <property type="entry name" value="Ribosomal_S2"/>
    <property type="match status" value="1"/>
</dbReference>
<dbReference type="PRINTS" id="PR00395">
    <property type="entry name" value="RIBOSOMALS2"/>
</dbReference>
<dbReference type="SUPFAM" id="SSF52313">
    <property type="entry name" value="Ribosomal protein S2"/>
    <property type="match status" value="1"/>
</dbReference>
<dbReference type="PROSITE" id="PS00962">
    <property type="entry name" value="RIBOSOMAL_S2_1"/>
    <property type="match status" value="1"/>
</dbReference>
<gene>
    <name evidence="1" type="primary">rpsB</name>
    <name type="ordered locus">CMM_1383</name>
</gene>
<comment type="similarity">
    <text evidence="1">Belongs to the universal ribosomal protein uS2 family.</text>
</comment>
<keyword id="KW-0687">Ribonucleoprotein</keyword>
<keyword id="KW-0689">Ribosomal protein</keyword>
<feature type="chain" id="PRO_1000003932" description="Small ribosomal subunit protein uS2">
    <location>
        <begin position="1"/>
        <end position="315"/>
    </location>
</feature>
<feature type="region of interest" description="Disordered" evidence="2">
    <location>
        <begin position="250"/>
        <end position="315"/>
    </location>
</feature>
<feature type="compositionally biased region" description="Basic and acidic residues" evidence="2">
    <location>
        <begin position="272"/>
        <end position="282"/>
    </location>
</feature>
<feature type="compositionally biased region" description="Basic and acidic residues" evidence="2">
    <location>
        <begin position="297"/>
        <end position="315"/>
    </location>
</feature>
<accession>A5CQS5</accession>
<proteinExistence type="inferred from homology"/>
<name>RS2_CLAM3</name>
<protein>
    <recommendedName>
        <fullName evidence="1">Small ribosomal subunit protein uS2</fullName>
    </recommendedName>
    <alternativeName>
        <fullName evidence="3">30S ribosomal protein S2</fullName>
    </alternativeName>
</protein>
<organism>
    <name type="scientific">Clavibacter michiganensis subsp. michiganensis (strain NCPPB 382)</name>
    <dbReference type="NCBI Taxonomy" id="443906"/>
    <lineage>
        <taxon>Bacteria</taxon>
        <taxon>Bacillati</taxon>
        <taxon>Actinomycetota</taxon>
        <taxon>Actinomycetes</taxon>
        <taxon>Micrococcales</taxon>
        <taxon>Microbacteriaceae</taxon>
        <taxon>Clavibacter</taxon>
    </lineage>
</organism>